<accession>H2DH20</accession>
<keyword id="KW-0349">Heme</keyword>
<keyword id="KW-0408">Iron</keyword>
<keyword id="KW-0472">Membrane</keyword>
<keyword id="KW-0479">Metal-binding</keyword>
<keyword id="KW-0503">Monooxygenase</keyword>
<keyword id="KW-0560">Oxidoreductase</keyword>
<keyword id="KW-0812">Transmembrane</keyword>
<keyword id="KW-1133">Transmembrane helix</keyword>
<sequence>MELQFPLFSIFFVTILFFFLFKKSSKTTKNLPPGPRKLPIIGNILELAGEVQHRVLAELSQKHGPIMHLQLAEISAIVVSSSKVAKEVLKTHDLAFSDRAQLQLSKIILKGCKDVVFNDYDDYWRQMRKICTVELLTANKVNSFRAIREDEAWNLVESIKTSLDSPVNLTHKFTSLTNAITCRAAIGERSKYQDELVHLIELMAALGGGFDIADLFPSYKFLHFLSGLRSKLEKVRKRLDDIFYNILKEHEEKRAKTKNSDGRVAGEEDLVDVLLRVQEKGGLQFPISSNNIQGIICDMLTAGTDTASTALDWAMSELVRYPSVLHKAQAEVREAFKGKTKIHEDDVQGLSYLKLVIKETLRLHPPAPLLLPKECREQCVIEGYTIPVRTKLIVNAWAIGRDPEYWVNAESFDPERFSNKSIDYNGTNLNYIPFGAGRRSCPGIAFGIATIELPLALLLYHFNWGMPGGIKPSALDMNEVLGATLKRKTNLLLSATSYTPNEDSS</sequence>
<dbReference type="EC" id="1.14.-.-"/>
<dbReference type="EMBL" id="JN604541">
    <property type="protein sequence ID" value="AEY75217.1"/>
    <property type="molecule type" value="mRNA"/>
</dbReference>
<dbReference type="SMR" id="H2DH20"/>
<dbReference type="GO" id="GO:0016020">
    <property type="term" value="C:membrane"/>
    <property type="evidence" value="ECO:0007669"/>
    <property type="project" value="UniProtKB-SubCell"/>
</dbReference>
<dbReference type="GO" id="GO:0020037">
    <property type="term" value="F:heme binding"/>
    <property type="evidence" value="ECO:0007669"/>
    <property type="project" value="InterPro"/>
</dbReference>
<dbReference type="GO" id="GO:0005506">
    <property type="term" value="F:iron ion binding"/>
    <property type="evidence" value="ECO:0007669"/>
    <property type="project" value="InterPro"/>
</dbReference>
<dbReference type="GO" id="GO:0004497">
    <property type="term" value="F:monooxygenase activity"/>
    <property type="evidence" value="ECO:0007669"/>
    <property type="project" value="UniProtKB-KW"/>
</dbReference>
<dbReference type="GO" id="GO:0016705">
    <property type="term" value="F:oxidoreductase activity, acting on paired donors, with incorporation or reduction of molecular oxygen"/>
    <property type="evidence" value="ECO:0007669"/>
    <property type="project" value="InterPro"/>
</dbReference>
<dbReference type="CDD" id="cd11072">
    <property type="entry name" value="CYP71-like"/>
    <property type="match status" value="1"/>
</dbReference>
<dbReference type="FunFam" id="1.10.630.10:FF:000043">
    <property type="entry name" value="Cytochrome P450 99A2"/>
    <property type="match status" value="1"/>
</dbReference>
<dbReference type="Gene3D" id="1.10.630.10">
    <property type="entry name" value="Cytochrome P450"/>
    <property type="match status" value="1"/>
</dbReference>
<dbReference type="InterPro" id="IPR052306">
    <property type="entry name" value="CYP450_71D"/>
</dbReference>
<dbReference type="InterPro" id="IPR001128">
    <property type="entry name" value="Cyt_P450"/>
</dbReference>
<dbReference type="InterPro" id="IPR017972">
    <property type="entry name" value="Cyt_P450_CS"/>
</dbReference>
<dbReference type="InterPro" id="IPR002401">
    <property type="entry name" value="Cyt_P450_E_grp-I"/>
</dbReference>
<dbReference type="InterPro" id="IPR036396">
    <property type="entry name" value="Cyt_P450_sf"/>
</dbReference>
<dbReference type="PANTHER" id="PTHR47953:SF16">
    <property type="entry name" value="CYTOCHROME P450 71D8"/>
    <property type="match status" value="1"/>
</dbReference>
<dbReference type="PANTHER" id="PTHR47953">
    <property type="entry name" value="OS08G0105600 PROTEIN"/>
    <property type="match status" value="1"/>
</dbReference>
<dbReference type="Pfam" id="PF00067">
    <property type="entry name" value="p450"/>
    <property type="match status" value="1"/>
</dbReference>
<dbReference type="PRINTS" id="PR00463">
    <property type="entry name" value="EP450I"/>
</dbReference>
<dbReference type="PRINTS" id="PR00385">
    <property type="entry name" value="P450"/>
</dbReference>
<dbReference type="SUPFAM" id="SSF48264">
    <property type="entry name" value="Cytochrome P450"/>
    <property type="match status" value="1"/>
</dbReference>
<dbReference type="PROSITE" id="PS00086">
    <property type="entry name" value="CYTOCHROME_P450"/>
    <property type="match status" value="1"/>
</dbReference>
<proteinExistence type="evidence at transcript level"/>
<name>C7D13_PANGI</name>
<reference key="1">
    <citation type="journal article" date="2011" name="Plant Cell Physiol.">
        <title>The Cyt P450 enzyme CYP716A47 catalyzes the formation of protopanaxadiol from dammarenediol-II during ginsenoside biosynthesis in Panax ginseng.</title>
        <authorList>
            <person name="Han J.Y."/>
            <person name="Kim H.J."/>
            <person name="Kwon Y.S."/>
            <person name="Choi Y.E."/>
        </authorList>
    </citation>
    <scope>NUCLEOTIDE SEQUENCE [MRNA]</scope>
</reference>
<evidence type="ECO:0000250" key="1"/>
<evidence type="ECO:0000255" key="2"/>
<evidence type="ECO:0000305" key="3"/>
<feature type="chain" id="PRO_0000425874" description="Cytochrome P450 CYP71D313">
    <location>
        <begin position="1"/>
        <end position="505"/>
    </location>
</feature>
<feature type="transmembrane region" description="Helical" evidence="2">
    <location>
        <begin position="1"/>
        <end position="21"/>
    </location>
</feature>
<feature type="transmembrane region" description="Helical" evidence="2">
    <location>
        <begin position="442"/>
        <end position="462"/>
    </location>
</feature>
<feature type="binding site" description="axial binding residue" evidence="1">
    <location>
        <position position="441"/>
    </location>
    <ligand>
        <name>heme</name>
        <dbReference type="ChEBI" id="CHEBI:30413"/>
    </ligand>
    <ligandPart>
        <name>Fe</name>
        <dbReference type="ChEBI" id="CHEBI:18248"/>
    </ligandPart>
</feature>
<protein>
    <recommendedName>
        <fullName>Cytochrome P450 CYP71D313</fullName>
        <ecNumber>1.14.-.-</ecNumber>
    </recommendedName>
</protein>
<organism>
    <name type="scientific">Panax ginseng</name>
    <name type="common">Korean ginseng</name>
    <dbReference type="NCBI Taxonomy" id="4054"/>
    <lineage>
        <taxon>Eukaryota</taxon>
        <taxon>Viridiplantae</taxon>
        <taxon>Streptophyta</taxon>
        <taxon>Embryophyta</taxon>
        <taxon>Tracheophyta</taxon>
        <taxon>Spermatophyta</taxon>
        <taxon>Magnoliopsida</taxon>
        <taxon>eudicotyledons</taxon>
        <taxon>Gunneridae</taxon>
        <taxon>Pentapetalae</taxon>
        <taxon>asterids</taxon>
        <taxon>campanulids</taxon>
        <taxon>Apiales</taxon>
        <taxon>Araliaceae</taxon>
        <taxon>Panax</taxon>
    </lineage>
</organism>
<comment type="function">
    <text evidence="1">Probable heme-thiolate monooxygenase.</text>
</comment>
<comment type="cofactor">
    <cofactor evidence="1">
        <name>heme</name>
        <dbReference type="ChEBI" id="CHEBI:30413"/>
    </cofactor>
</comment>
<comment type="subcellular location">
    <subcellularLocation>
        <location evidence="3">Membrane</location>
        <topology evidence="3">Multi-pass membrane protein</topology>
    </subcellularLocation>
</comment>
<comment type="similarity">
    <text evidence="3">Belongs to the cytochrome P450 family.</text>
</comment>